<feature type="chain" id="PRO_1000123257" description="Phosphopantetheine adenylyltransferase">
    <location>
        <begin position="1"/>
        <end position="164"/>
    </location>
</feature>
<feature type="binding site" evidence="1">
    <location>
        <begin position="10"/>
        <end position="11"/>
    </location>
    <ligand>
        <name>ATP</name>
        <dbReference type="ChEBI" id="CHEBI:30616"/>
    </ligand>
</feature>
<feature type="binding site" evidence="1">
    <location>
        <position position="10"/>
    </location>
    <ligand>
        <name>substrate</name>
    </ligand>
</feature>
<feature type="binding site" evidence="1">
    <location>
        <position position="18"/>
    </location>
    <ligand>
        <name>ATP</name>
        <dbReference type="ChEBI" id="CHEBI:30616"/>
    </ligand>
</feature>
<feature type="binding site" evidence="1">
    <location>
        <position position="42"/>
    </location>
    <ligand>
        <name>substrate</name>
    </ligand>
</feature>
<feature type="binding site" evidence="1">
    <location>
        <position position="74"/>
    </location>
    <ligand>
        <name>substrate</name>
    </ligand>
</feature>
<feature type="binding site" evidence="1">
    <location>
        <position position="88"/>
    </location>
    <ligand>
        <name>substrate</name>
    </ligand>
</feature>
<feature type="binding site" evidence="1">
    <location>
        <begin position="89"/>
        <end position="91"/>
    </location>
    <ligand>
        <name>ATP</name>
        <dbReference type="ChEBI" id="CHEBI:30616"/>
    </ligand>
</feature>
<feature type="binding site" evidence="1">
    <location>
        <position position="99"/>
    </location>
    <ligand>
        <name>ATP</name>
        <dbReference type="ChEBI" id="CHEBI:30616"/>
    </ligand>
</feature>
<feature type="binding site" evidence="1">
    <location>
        <begin position="124"/>
        <end position="130"/>
    </location>
    <ligand>
        <name>ATP</name>
        <dbReference type="ChEBI" id="CHEBI:30616"/>
    </ligand>
</feature>
<feature type="site" description="Transition state stabilizer" evidence="1">
    <location>
        <position position="18"/>
    </location>
</feature>
<sequence>MNRAAIYPGSFDPLTNGHLAIIQRGLNLFDRLVVAVANNPQKSPMFTVDERKALIREAVGNDPRVEVDSFDGLMVDYARTRGIPKVLRGLRAVSDFEYEFQLANMNKKLLPEFESVFVMTGEDYFFVSARLVREVAQFGGNVEGLVPANVLEALQRKLGRPPRS</sequence>
<dbReference type="EC" id="2.7.7.3" evidence="1"/>
<dbReference type="EMBL" id="CP001359">
    <property type="protein sequence ID" value="ACL65543.1"/>
    <property type="molecule type" value="Genomic_DNA"/>
</dbReference>
<dbReference type="RefSeq" id="WP_012526143.1">
    <property type="nucleotide sequence ID" value="NC_011891.1"/>
</dbReference>
<dbReference type="SMR" id="B8J9D7"/>
<dbReference type="KEGG" id="acp:A2cp1_2205"/>
<dbReference type="HOGENOM" id="CLU_100149_0_1_7"/>
<dbReference type="UniPathway" id="UPA00241">
    <property type="reaction ID" value="UER00355"/>
</dbReference>
<dbReference type="Proteomes" id="UP000007089">
    <property type="component" value="Chromosome"/>
</dbReference>
<dbReference type="GO" id="GO:0005737">
    <property type="term" value="C:cytoplasm"/>
    <property type="evidence" value="ECO:0007669"/>
    <property type="project" value="UniProtKB-SubCell"/>
</dbReference>
<dbReference type="GO" id="GO:0005524">
    <property type="term" value="F:ATP binding"/>
    <property type="evidence" value="ECO:0007669"/>
    <property type="project" value="UniProtKB-KW"/>
</dbReference>
<dbReference type="GO" id="GO:0004595">
    <property type="term" value="F:pantetheine-phosphate adenylyltransferase activity"/>
    <property type="evidence" value="ECO:0007669"/>
    <property type="project" value="UniProtKB-UniRule"/>
</dbReference>
<dbReference type="GO" id="GO:0015937">
    <property type="term" value="P:coenzyme A biosynthetic process"/>
    <property type="evidence" value="ECO:0007669"/>
    <property type="project" value="UniProtKB-UniRule"/>
</dbReference>
<dbReference type="CDD" id="cd02163">
    <property type="entry name" value="PPAT"/>
    <property type="match status" value="1"/>
</dbReference>
<dbReference type="Gene3D" id="3.40.50.620">
    <property type="entry name" value="HUPs"/>
    <property type="match status" value="1"/>
</dbReference>
<dbReference type="HAMAP" id="MF_00151">
    <property type="entry name" value="PPAT_bact"/>
    <property type="match status" value="1"/>
</dbReference>
<dbReference type="InterPro" id="IPR004821">
    <property type="entry name" value="Cyt_trans-like"/>
</dbReference>
<dbReference type="InterPro" id="IPR001980">
    <property type="entry name" value="PPAT"/>
</dbReference>
<dbReference type="InterPro" id="IPR014729">
    <property type="entry name" value="Rossmann-like_a/b/a_fold"/>
</dbReference>
<dbReference type="NCBIfam" id="TIGR01510">
    <property type="entry name" value="coaD_prev_kdtB"/>
    <property type="match status" value="1"/>
</dbReference>
<dbReference type="NCBIfam" id="TIGR00125">
    <property type="entry name" value="cyt_tran_rel"/>
    <property type="match status" value="1"/>
</dbReference>
<dbReference type="PANTHER" id="PTHR21342">
    <property type="entry name" value="PHOSPHOPANTETHEINE ADENYLYLTRANSFERASE"/>
    <property type="match status" value="1"/>
</dbReference>
<dbReference type="PANTHER" id="PTHR21342:SF1">
    <property type="entry name" value="PHOSPHOPANTETHEINE ADENYLYLTRANSFERASE"/>
    <property type="match status" value="1"/>
</dbReference>
<dbReference type="Pfam" id="PF01467">
    <property type="entry name" value="CTP_transf_like"/>
    <property type="match status" value="1"/>
</dbReference>
<dbReference type="PRINTS" id="PR01020">
    <property type="entry name" value="LPSBIOSNTHSS"/>
</dbReference>
<dbReference type="SUPFAM" id="SSF52374">
    <property type="entry name" value="Nucleotidylyl transferase"/>
    <property type="match status" value="1"/>
</dbReference>
<evidence type="ECO:0000255" key="1">
    <source>
        <dbReference type="HAMAP-Rule" id="MF_00151"/>
    </source>
</evidence>
<proteinExistence type="inferred from homology"/>
<reference key="1">
    <citation type="submission" date="2009-01" db="EMBL/GenBank/DDBJ databases">
        <title>Complete sequence of Anaeromyxobacter dehalogenans 2CP-1.</title>
        <authorList>
            <person name="Lucas S."/>
            <person name="Copeland A."/>
            <person name="Lapidus A."/>
            <person name="Glavina del Rio T."/>
            <person name="Dalin E."/>
            <person name="Tice H."/>
            <person name="Bruce D."/>
            <person name="Goodwin L."/>
            <person name="Pitluck S."/>
            <person name="Saunders E."/>
            <person name="Brettin T."/>
            <person name="Detter J.C."/>
            <person name="Han C."/>
            <person name="Larimer F."/>
            <person name="Land M."/>
            <person name="Hauser L."/>
            <person name="Kyrpides N."/>
            <person name="Ovchinnikova G."/>
            <person name="Beliaev A.S."/>
            <person name="Richardson P."/>
        </authorList>
    </citation>
    <scope>NUCLEOTIDE SEQUENCE [LARGE SCALE GENOMIC DNA]</scope>
    <source>
        <strain>2CP-1 / ATCC BAA-258</strain>
    </source>
</reference>
<gene>
    <name evidence="1" type="primary">coaD</name>
    <name type="ordered locus">A2cp1_2205</name>
</gene>
<keyword id="KW-0067">ATP-binding</keyword>
<keyword id="KW-0173">Coenzyme A biosynthesis</keyword>
<keyword id="KW-0963">Cytoplasm</keyword>
<keyword id="KW-0460">Magnesium</keyword>
<keyword id="KW-0547">Nucleotide-binding</keyword>
<keyword id="KW-0548">Nucleotidyltransferase</keyword>
<keyword id="KW-0808">Transferase</keyword>
<protein>
    <recommendedName>
        <fullName evidence="1">Phosphopantetheine adenylyltransferase</fullName>
        <ecNumber evidence="1">2.7.7.3</ecNumber>
    </recommendedName>
    <alternativeName>
        <fullName evidence="1">Dephospho-CoA pyrophosphorylase</fullName>
    </alternativeName>
    <alternativeName>
        <fullName evidence="1">Pantetheine-phosphate adenylyltransferase</fullName>
        <shortName evidence="1">PPAT</shortName>
    </alternativeName>
</protein>
<name>COAD_ANAD2</name>
<organism>
    <name type="scientific">Anaeromyxobacter dehalogenans (strain 2CP-1 / ATCC BAA-258)</name>
    <dbReference type="NCBI Taxonomy" id="455488"/>
    <lineage>
        <taxon>Bacteria</taxon>
        <taxon>Pseudomonadati</taxon>
        <taxon>Myxococcota</taxon>
        <taxon>Myxococcia</taxon>
        <taxon>Myxococcales</taxon>
        <taxon>Cystobacterineae</taxon>
        <taxon>Anaeromyxobacteraceae</taxon>
        <taxon>Anaeromyxobacter</taxon>
    </lineage>
</organism>
<accession>B8J9D7</accession>
<comment type="function">
    <text evidence="1">Reversibly transfers an adenylyl group from ATP to 4'-phosphopantetheine, yielding dephospho-CoA (dPCoA) and pyrophosphate.</text>
</comment>
<comment type="catalytic activity">
    <reaction evidence="1">
        <text>(R)-4'-phosphopantetheine + ATP + H(+) = 3'-dephospho-CoA + diphosphate</text>
        <dbReference type="Rhea" id="RHEA:19801"/>
        <dbReference type="ChEBI" id="CHEBI:15378"/>
        <dbReference type="ChEBI" id="CHEBI:30616"/>
        <dbReference type="ChEBI" id="CHEBI:33019"/>
        <dbReference type="ChEBI" id="CHEBI:57328"/>
        <dbReference type="ChEBI" id="CHEBI:61723"/>
        <dbReference type="EC" id="2.7.7.3"/>
    </reaction>
</comment>
<comment type="cofactor">
    <cofactor evidence="1">
        <name>Mg(2+)</name>
        <dbReference type="ChEBI" id="CHEBI:18420"/>
    </cofactor>
</comment>
<comment type="pathway">
    <text evidence="1">Cofactor biosynthesis; coenzyme A biosynthesis; CoA from (R)-pantothenate: step 4/5.</text>
</comment>
<comment type="subunit">
    <text evidence="1">Homohexamer.</text>
</comment>
<comment type="subcellular location">
    <subcellularLocation>
        <location evidence="1">Cytoplasm</location>
    </subcellularLocation>
</comment>
<comment type="similarity">
    <text evidence="1">Belongs to the bacterial CoaD family.</text>
</comment>